<proteinExistence type="inferred from homology"/>
<gene>
    <name evidence="1" type="primary">codY</name>
    <name type="ordered locus">SPy_1777</name>
    <name type="ordered locus">M5005_Spy1512</name>
</gene>
<keyword id="KW-0963">Cytoplasm</keyword>
<keyword id="KW-0238">DNA-binding</keyword>
<keyword id="KW-1185">Reference proteome</keyword>
<keyword id="KW-0678">Repressor</keyword>
<keyword id="KW-0804">Transcription</keyword>
<keyword id="KW-0805">Transcription regulation</keyword>
<evidence type="ECO:0000255" key="1">
    <source>
        <dbReference type="HAMAP-Rule" id="MF_00621"/>
    </source>
</evidence>
<accession>P0A349</accession>
<accession>Q48WZ5</accession>
<accession>Q99YB7</accession>
<name>CODY_STRP1</name>
<sequence length="260" mass="28634">MPNLLEKTRKITSILQRSVDSLETELPYNTMASRLADIIDCNACIINGGGTLLGYAMKYKTNTDRVEEFFEAKQFPDTYVKAASRVYDTEANLSVENELTIFPVESKDTYPGGLTTIAPIYGGGMRLGSLIIWRNDNEFSDDDLILVEISSTVVGIQLLNLQTENLEDTIRKQTAVNMAINTLSYSEMKAVAAILGELDGNEGRLTASVIADRIGITRSVIVNALRKLESAGIIESRSLGMKGTYLKVINEGIFAKLKEF</sequence>
<dbReference type="EMBL" id="AE004092">
    <property type="protein sequence ID" value="AAK34513.1"/>
    <property type="molecule type" value="Genomic_DNA"/>
</dbReference>
<dbReference type="EMBL" id="CP000017">
    <property type="protein sequence ID" value="AAZ52130.1"/>
    <property type="molecule type" value="Genomic_DNA"/>
</dbReference>
<dbReference type="RefSeq" id="NP_269792.1">
    <property type="nucleotide sequence ID" value="NC_002737.2"/>
</dbReference>
<dbReference type="SMR" id="P0A349"/>
<dbReference type="PaxDb" id="1314-HKU360_01564"/>
<dbReference type="KEGG" id="spy:SPy_1777"/>
<dbReference type="KEGG" id="spz:M5005_Spy1512"/>
<dbReference type="PATRIC" id="fig|160490.10.peg.1546"/>
<dbReference type="HOGENOM" id="CLU_089581_0_0_9"/>
<dbReference type="OMA" id="FPEEYNE"/>
<dbReference type="Proteomes" id="UP000000750">
    <property type="component" value="Chromosome"/>
</dbReference>
<dbReference type="GO" id="GO:0005737">
    <property type="term" value="C:cytoplasm"/>
    <property type="evidence" value="ECO:0007669"/>
    <property type="project" value="UniProtKB-SubCell"/>
</dbReference>
<dbReference type="GO" id="GO:0003677">
    <property type="term" value="F:DNA binding"/>
    <property type="evidence" value="ECO:0007669"/>
    <property type="project" value="UniProtKB-UniRule"/>
</dbReference>
<dbReference type="GO" id="GO:0003700">
    <property type="term" value="F:DNA-binding transcription factor activity"/>
    <property type="evidence" value="ECO:0007669"/>
    <property type="project" value="InterPro"/>
</dbReference>
<dbReference type="GO" id="GO:0005525">
    <property type="term" value="F:GTP binding"/>
    <property type="evidence" value="ECO:0007669"/>
    <property type="project" value="InterPro"/>
</dbReference>
<dbReference type="GO" id="GO:0045892">
    <property type="term" value="P:negative regulation of DNA-templated transcription"/>
    <property type="evidence" value="ECO:0007669"/>
    <property type="project" value="UniProtKB-UniRule"/>
</dbReference>
<dbReference type="CDD" id="cd00090">
    <property type="entry name" value="HTH_ARSR"/>
    <property type="match status" value="1"/>
</dbReference>
<dbReference type="FunFam" id="1.10.10.10:FF:000034">
    <property type="entry name" value="GTP-sensing transcriptional pleiotropic repressor CodY"/>
    <property type="match status" value="1"/>
</dbReference>
<dbReference type="FunFam" id="3.30.450.40:FF:000003">
    <property type="entry name" value="GTP-sensing transcriptional pleiotropic repressor CodY"/>
    <property type="match status" value="1"/>
</dbReference>
<dbReference type="Gene3D" id="3.30.450.40">
    <property type="match status" value="1"/>
</dbReference>
<dbReference type="Gene3D" id="1.10.10.10">
    <property type="entry name" value="Winged helix-like DNA-binding domain superfamily/Winged helix DNA-binding domain"/>
    <property type="match status" value="1"/>
</dbReference>
<dbReference type="HAMAP" id="MF_00621">
    <property type="entry name" value="HTH_type_CodY"/>
    <property type="match status" value="1"/>
</dbReference>
<dbReference type="InterPro" id="IPR011991">
    <property type="entry name" value="ArsR-like_HTH"/>
</dbReference>
<dbReference type="InterPro" id="IPR014154">
    <property type="entry name" value="CodY"/>
</dbReference>
<dbReference type="InterPro" id="IPR029016">
    <property type="entry name" value="GAF-like_dom_sf"/>
</dbReference>
<dbReference type="InterPro" id="IPR013198">
    <property type="entry name" value="GTP_trans_reg_CodY_C"/>
</dbReference>
<dbReference type="InterPro" id="IPR010312">
    <property type="entry name" value="Transc_reg_CodY_N"/>
</dbReference>
<dbReference type="InterPro" id="IPR036388">
    <property type="entry name" value="WH-like_DNA-bd_sf"/>
</dbReference>
<dbReference type="InterPro" id="IPR036390">
    <property type="entry name" value="WH_DNA-bd_sf"/>
</dbReference>
<dbReference type="NCBIfam" id="TIGR02787">
    <property type="entry name" value="codY_Gpos"/>
    <property type="match status" value="1"/>
</dbReference>
<dbReference type="NCBIfam" id="NF003170">
    <property type="entry name" value="PRK04158.1"/>
    <property type="match status" value="1"/>
</dbReference>
<dbReference type="PANTHER" id="PTHR40062:SF1">
    <property type="entry name" value="GLOBAL TRANSCRIPTIONAL REGULATOR CODY"/>
    <property type="match status" value="1"/>
</dbReference>
<dbReference type="PANTHER" id="PTHR40062">
    <property type="entry name" value="GTP-SENSING TRANSCRIPTIONAL PLEIOTROPIC REPRESSOR CODY"/>
    <property type="match status" value="1"/>
</dbReference>
<dbReference type="Pfam" id="PF06018">
    <property type="entry name" value="CodY"/>
    <property type="match status" value="1"/>
</dbReference>
<dbReference type="Pfam" id="PF08222">
    <property type="entry name" value="HTH_CodY"/>
    <property type="match status" value="1"/>
</dbReference>
<dbReference type="PIRSF" id="PIRSF011572">
    <property type="entry name" value="GTP_sensing_CodY"/>
    <property type="match status" value="1"/>
</dbReference>
<dbReference type="SUPFAM" id="SSF46785">
    <property type="entry name" value="Winged helix' DNA-binding domain"/>
    <property type="match status" value="1"/>
</dbReference>
<protein>
    <recommendedName>
        <fullName evidence="1">Global transcriptional regulator CodY</fullName>
    </recommendedName>
</protein>
<comment type="function">
    <text evidence="1">DNA-binding global transcriptional regulator which is involved in the adaptive response to starvation and acts by directly or indirectly controlling the expression of numerous genes in response to nutrient availability. During rapid exponential growth, CodY is highly active and represses genes whose products allow adaptation to nutrient depletion.</text>
</comment>
<comment type="subcellular location">
    <subcellularLocation>
        <location evidence="1">Cytoplasm</location>
    </subcellularLocation>
</comment>
<comment type="similarity">
    <text evidence="1">Belongs to the CodY family.</text>
</comment>
<reference key="1">
    <citation type="journal article" date="2001" name="Proc. Natl. Acad. Sci. U.S.A.">
        <title>Complete genome sequence of an M1 strain of Streptococcus pyogenes.</title>
        <authorList>
            <person name="Ferretti J.J."/>
            <person name="McShan W.M."/>
            <person name="Ajdic D.J."/>
            <person name="Savic D.J."/>
            <person name="Savic G."/>
            <person name="Lyon K."/>
            <person name="Primeaux C."/>
            <person name="Sezate S."/>
            <person name="Suvorov A.N."/>
            <person name="Kenton S."/>
            <person name="Lai H.S."/>
            <person name="Lin S.P."/>
            <person name="Qian Y."/>
            <person name="Jia H.G."/>
            <person name="Najar F.Z."/>
            <person name="Ren Q."/>
            <person name="Zhu H."/>
            <person name="Song L."/>
            <person name="White J."/>
            <person name="Yuan X."/>
            <person name="Clifton S.W."/>
            <person name="Roe B.A."/>
            <person name="McLaughlin R.E."/>
        </authorList>
    </citation>
    <scope>NUCLEOTIDE SEQUENCE [LARGE SCALE GENOMIC DNA]</scope>
    <source>
        <strain>ATCC 700294 / SF370 / Serotype M1</strain>
    </source>
</reference>
<reference key="2">
    <citation type="journal article" date="2005" name="J. Infect. Dis.">
        <title>Evolutionary origin and emergence of a highly successful clone of serotype M1 group A Streptococcus involved multiple horizontal gene transfer events.</title>
        <authorList>
            <person name="Sumby P."/>
            <person name="Porcella S.F."/>
            <person name="Madrigal A.G."/>
            <person name="Barbian K.D."/>
            <person name="Virtaneva K."/>
            <person name="Ricklefs S.M."/>
            <person name="Sturdevant D.E."/>
            <person name="Graham M.R."/>
            <person name="Vuopio-Varkila J."/>
            <person name="Hoe N.P."/>
            <person name="Musser J.M."/>
        </authorList>
    </citation>
    <scope>NUCLEOTIDE SEQUENCE [LARGE SCALE GENOMIC DNA]</scope>
    <source>
        <strain>ATCC BAA-947 / MGAS5005 / Serotype M1</strain>
    </source>
</reference>
<feature type="chain" id="PRO_0000213244" description="Global transcriptional regulator CodY">
    <location>
        <begin position="1"/>
        <end position="260"/>
    </location>
</feature>
<feature type="DNA-binding region" description="H-T-H motif" evidence="1">
    <location>
        <begin position="207"/>
        <end position="226"/>
    </location>
</feature>
<feature type="region of interest" description="GAF domain" evidence="1">
    <location>
        <begin position="1"/>
        <end position="159"/>
    </location>
</feature>
<organism>
    <name type="scientific">Streptococcus pyogenes serotype M1</name>
    <dbReference type="NCBI Taxonomy" id="301447"/>
    <lineage>
        <taxon>Bacteria</taxon>
        <taxon>Bacillati</taxon>
        <taxon>Bacillota</taxon>
        <taxon>Bacilli</taxon>
        <taxon>Lactobacillales</taxon>
        <taxon>Streptococcaceae</taxon>
        <taxon>Streptococcus</taxon>
    </lineage>
</organism>